<sequence>MARTPQSTPLLISLSVLALLQTSYAGGIAIYWGQNGNEGTLTQTCNTGKYSYVNIAFLNKFGNGQTPEINLAGHCNPASNGCTSVSTGIRNCQNRGIKVMLSIGGGAGSYSLSSSNDAQNVANYLWNNFLGGQSSSRPLGDAVLDGIDFDIELGSTLHWDDLARALSRIEFQQERGRKVYLTAAPQCPFPDKVPGTALNTGLFDYVWVQFYNNPPCQYSSGNTNNLLNSWNRWTSSINSTGSFMGLPASSAAAGRGFIPANVLTSQILPVIKRSPKYGGVMLWSKYYDDQSGYSSSIKSSV</sequence>
<name>CHIT3_VITVI</name>
<comment type="function">
    <text>Defense against chitin containing fungal pathogens.</text>
</comment>
<comment type="catalytic activity">
    <reaction>
        <text>Random endo-hydrolysis of N-acetyl-beta-D-glucosaminide (1-&gt;4)-beta-linkages in chitin and chitodextrins.</text>
        <dbReference type="EC" id="3.2.1.14"/>
    </reaction>
</comment>
<comment type="similarity">
    <text evidence="4">Belongs to the glycosyl hydrolase 18 family. Chitinase class II subfamily.</text>
</comment>
<evidence type="ECO:0000250" key="1"/>
<evidence type="ECO:0000255" key="2"/>
<evidence type="ECO:0000255" key="3">
    <source>
        <dbReference type="PROSITE-ProRule" id="PRU01258"/>
    </source>
</evidence>
<evidence type="ECO:0000305" key="4"/>
<organism>
    <name type="scientific">Vitis vinifera</name>
    <name type="common">Grape</name>
    <dbReference type="NCBI Taxonomy" id="29760"/>
    <lineage>
        <taxon>Eukaryota</taxon>
        <taxon>Viridiplantae</taxon>
        <taxon>Streptophyta</taxon>
        <taxon>Embryophyta</taxon>
        <taxon>Tracheophyta</taxon>
        <taxon>Spermatophyta</taxon>
        <taxon>Magnoliopsida</taxon>
        <taxon>eudicotyledons</taxon>
        <taxon>Gunneridae</taxon>
        <taxon>Pentapetalae</taxon>
        <taxon>rosids</taxon>
        <taxon>Vitales</taxon>
        <taxon>Vitaceae</taxon>
        <taxon>Viteae</taxon>
        <taxon>Vitis</taxon>
    </lineage>
</organism>
<feature type="signal peptide" evidence="2">
    <location>
        <begin position="1"/>
        <end position="25"/>
    </location>
</feature>
<feature type="chain" id="PRO_0000011921" description="Acidic endochitinase">
    <location>
        <begin position="26"/>
        <end position="301"/>
    </location>
</feature>
<feature type="domain" description="GH18" evidence="3">
    <location>
        <begin position="26"/>
        <end position="301"/>
    </location>
</feature>
<feature type="active site" description="Proton donor" evidence="3">
    <location>
        <position position="152"/>
    </location>
</feature>
<feature type="disulfide bond" evidence="1">
    <location>
        <begin position="45"/>
        <end position="92"/>
    </location>
</feature>
<feature type="disulfide bond" evidence="1">
    <location>
        <begin position="75"/>
        <end position="82"/>
    </location>
</feature>
<feature type="disulfide bond" evidence="1">
    <location>
        <begin position="187"/>
        <end position="216"/>
    </location>
</feature>
<reference key="1">
    <citation type="journal article" date="1997" name="Plant Physiol.">
        <title>Differential expression of chitinases in Vitis vinifera L. responding to systemic acquired resistance activators or fungal challenge.</title>
        <authorList>
            <person name="Busam G."/>
            <person name="Kassemeyer H.H."/>
            <person name="Matern U."/>
        </authorList>
    </citation>
    <scope>NUCLEOTIDE SEQUENCE [MRNA]</scope>
    <source>
        <strain>cv. Pinot</strain>
    </source>
</reference>
<protein>
    <recommendedName>
        <fullName>Acidic endochitinase</fullName>
        <ecNumber>3.2.1.14</ecNumber>
    </recommendedName>
</protein>
<dbReference type="EC" id="3.2.1.14"/>
<dbReference type="EMBL" id="Z68123">
    <property type="protein sequence ID" value="CAA92207.1"/>
    <property type="molecule type" value="mRNA"/>
</dbReference>
<dbReference type="RefSeq" id="NP_001268048.1">
    <property type="nucleotide sequence ID" value="NM_001281119.1"/>
</dbReference>
<dbReference type="SMR" id="P51614"/>
<dbReference type="CAZy" id="GH18">
    <property type="family name" value="Glycoside Hydrolase Family 18"/>
</dbReference>
<dbReference type="PaxDb" id="29760-VIT_16s0050g02220.t01"/>
<dbReference type="GeneID" id="100233088"/>
<dbReference type="KEGG" id="vvi:100233088"/>
<dbReference type="eggNOG" id="KOG4701">
    <property type="taxonomic scope" value="Eukaryota"/>
</dbReference>
<dbReference type="ExpressionAtlas" id="P51614">
    <property type="expression patterns" value="baseline and differential"/>
</dbReference>
<dbReference type="GO" id="GO:0008843">
    <property type="term" value="F:endochitinase activity"/>
    <property type="evidence" value="ECO:0007669"/>
    <property type="project" value="UniProtKB-EC"/>
</dbReference>
<dbReference type="GO" id="GO:0006032">
    <property type="term" value="P:chitin catabolic process"/>
    <property type="evidence" value="ECO:0007669"/>
    <property type="project" value="UniProtKB-KW"/>
</dbReference>
<dbReference type="GO" id="GO:0000272">
    <property type="term" value="P:polysaccharide catabolic process"/>
    <property type="evidence" value="ECO:0007669"/>
    <property type="project" value="UniProtKB-KW"/>
</dbReference>
<dbReference type="CDD" id="cd02877">
    <property type="entry name" value="GH18_hevamine_XipI_class_III"/>
    <property type="match status" value="1"/>
</dbReference>
<dbReference type="FunFam" id="3.20.20.80:FF:000015">
    <property type="entry name" value="Acidic endochitinase SE2"/>
    <property type="match status" value="1"/>
</dbReference>
<dbReference type="Gene3D" id="3.20.20.80">
    <property type="entry name" value="Glycosidases"/>
    <property type="match status" value="1"/>
</dbReference>
<dbReference type="InterPro" id="IPR045321">
    <property type="entry name" value="Cts1-like"/>
</dbReference>
<dbReference type="InterPro" id="IPR001223">
    <property type="entry name" value="Glyco_hydro18_cat"/>
</dbReference>
<dbReference type="InterPro" id="IPR001579">
    <property type="entry name" value="Glyco_hydro_18_chit_AS"/>
</dbReference>
<dbReference type="InterPro" id="IPR017853">
    <property type="entry name" value="Glycoside_hydrolase_SF"/>
</dbReference>
<dbReference type="InterPro" id="IPR050542">
    <property type="entry name" value="Glycosyl_Hydrlase18_Chitinase"/>
</dbReference>
<dbReference type="PANTHER" id="PTHR45708:SF21">
    <property type="entry name" value="ACIDIC ENDOCHITINASE"/>
    <property type="match status" value="1"/>
</dbReference>
<dbReference type="PANTHER" id="PTHR45708">
    <property type="entry name" value="ENDOCHITINASE"/>
    <property type="match status" value="1"/>
</dbReference>
<dbReference type="Pfam" id="PF00704">
    <property type="entry name" value="Glyco_hydro_18"/>
    <property type="match status" value="1"/>
</dbReference>
<dbReference type="SUPFAM" id="SSF51445">
    <property type="entry name" value="(Trans)glycosidases"/>
    <property type="match status" value="1"/>
</dbReference>
<dbReference type="PROSITE" id="PS01095">
    <property type="entry name" value="GH18_1"/>
    <property type="match status" value="1"/>
</dbReference>
<dbReference type="PROSITE" id="PS51910">
    <property type="entry name" value="GH18_2"/>
    <property type="match status" value="1"/>
</dbReference>
<gene>
    <name type="primary">CHIT3</name>
</gene>
<accession>P51614</accession>
<proteinExistence type="evidence at transcript level"/>
<keyword id="KW-0119">Carbohydrate metabolism</keyword>
<keyword id="KW-0146">Chitin degradation</keyword>
<keyword id="KW-1015">Disulfide bond</keyword>
<keyword id="KW-0326">Glycosidase</keyword>
<keyword id="KW-0378">Hydrolase</keyword>
<keyword id="KW-0624">Polysaccharide degradation</keyword>
<keyword id="KW-0732">Signal</keyword>